<comment type="function">
    <text evidence="1">NAD-dependent lysine deacetylase and desuccinylase that specifically removes acetyl and succinyl groups on target proteins. Modulates the activities of several proteins which are inactive in their acylated form.</text>
</comment>
<comment type="function">
    <text evidence="2 3">Deacetylates acetylated HupB (PubMed:28935371). Desuccinylates succinylated HupB (PubMed:34224344).</text>
</comment>
<comment type="catalytic activity">
    <reaction evidence="1 2">
        <text>N(6)-acetyl-L-lysyl-[protein] + NAD(+) + H2O = 2''-O-acetyl-ADP-D-ribose + nicotinamide + L-lysyl-[protein]</text>
        <dbReference type="Rhea" id="RHEA:43636"/>
        <dbReference type="Rhea" id="RHEA-COMP:9752"/>
        <dbReference type="Rhea" id="RHEA-COMP:10731"/>
        <dbReference type="ChEBI" id="CHEBI:15377"/>
        <dbReference type="ChEBI" id="CHEBI:17154"/>
        <dbReference type="ChEBI" id="CHEBI:29969"/>
        <dbReference type="ChEBI" id="CHEBI:57540"/>
        <dbReference type="ChEBI" id="CHEBI:61930"/>
        <dbReference type="ChEBI" id="CHEBI:83767"/>
        <dbReference type="EC" id="2.3.1.286"/>
    </reaction>
</comment>
<comment type="catalytic activity">
    <reaction evidence="1 3">
        <text>N(6)-succinyl-L-lysyl-[protein] + NAD(+) + H2O = 2''-O-succinyl-ADP-D-ribose + nicotinamide + L-lysyl-[protein]</text>
        <dbReference type="Rhea" id="RHEA:47668"/>
        <dbReference type="Rhea" id="RHEA-COMP:9752"/>
        <dbReference type="Rhea" id="RHEA-COMP:11877"/>
        <dbReference type="ChEBI" id="CHEBI:15377"/>
        <dbReference type="ChEBI" id="CHEBI:17154"/>
        <dbReference type="ChEBI" id="CHEBI:29969"/>
        <dbReference type="ChEBI" id="CHEBI:57540"/>
        <dbReference type="ChEBI" id="CHEBI:87830"/>
        <dbReference type="ChEBI" id="CHEBI:87832"/>
    </reaction>
</comment>
<comment type="cofactor">
    <cofactor evidence="1">
        <name>Zn(2+)</name>
        <dbReference type="ChEBI" id="CHEBI:29105"/>
    </cofactor>
    <text evidence="1">Binds 1 zinc ion per subunit.</text>
</comment>
<comment type="activity regulation">
    <text evidence="2 3">Deacetylation and desuccinylation are inhibited by nicotinamide.</text>
</comment>
<comment type="subunit">
    <text evidence="2">Interacts with DNA-binding protein HupB (PubMed:28935371).</text>
</comment>
<comment type="subcellular location">
    <subcellularLocation>
        <location evidence="1">Cytoplasm</location>
    </subcellularLocation>
</comment>
<comment type="domain">
    <text evidence="1">2 residues (Tyr-53 and Arg-56) present in a large hydrophobic pocket are probably involved in substrate specificity. They are important for desuccinylation activity, but dispensable for deacetylation activity.</text>
</comment>
<comment type="similarity">
    <text evidence="1">Belongs to the sirtuin family. Class III subfamily.</text>
</comment>
<sequence length="237" mass="25661">MRVAVLSGAGISAESGVPTFRDDKNGLWARFDPYELSSTQGWLRNPERVWGWYLWRHYLVANVEPNDGHRAIAAWQDHAEVSVITQNVDDLHERAGSGAVHHLHGSLFEFRCARCGVPYTDALPEMPEPAIEVEPPVCDCGGLIRPDIVWFGEPLPEEPWRSAVEATGSADVMVVVGTSAIVYPAAGLPDLALARGTAVIEVNPEPTPLSGSATISIRESASQALPGLLERLPALLK</sequence>
<reference evidence="4" key="1">
    <citation type="journal article" date="2008" name="PLoS ONE">
        <title>Genetic basis of virulence attenuation revealed by comparative genomic analysis of Mycobacterium tuberculosis strain H37Ra versus H37Rv.</title>
        <authorList>
            <person name="Zheng H."/>
            <person name="Lu L."/>
            <person name="Wang B."/>
            <person name="Pu S."/>
            <person name="Zhang X."/>
            <person name="Zhu G."/>
            <person name="Shi W."/>
            <person name="Zhang L."/>
            <person name="Wang H."/>
            <person name="Wang S."/>
            <person name="Zhao G."/>
            <person name="Zhang Y."/>
        </authorList>
    </citation>
    <scope>NUCLEOTIDE SEQUENCE [LARGE SCALE GENOMIC DNA]</scope>
    <source>
        <strain>ATCC 25177 / H37Ra</strain>
    </source>
</reference>
<reference key="2">
    <citation type="journal article" date="2017" name="Biochem. Biophys. Res. Commun.">
        <title>A Sir2 family protein Rv1151c deacetylates HU to alter its DNA binding mode in Mycobacterium tuberculosis.</title>
        <authorList>
            <person name="Anand C."/>
            <person name="Garg R."/>
            <person name="Ghosh S."/>
            <person name="Nagaraja V."/>
        </authorList>
    </citation>
    <scope>FUNCTION</scope>
    <scope>CATALYTIC ACTIVITY</scope>
    <scope>ACTIVITY REGULATION</scope>
    <scope>INTERACTION WITH HUPB</scope>
    <source>
        <strain>ATCC 25177 / H37Ra</strain>
    </source>
</reference>
<reference key="3">
    <citation type="journal article" date="2021" name="Microbiology">
        <title>Rv0802c is an acyltransferase that succinylates and acetylates Mycobacterium tuberculosis nucleoid-associated protein HU.</title>
        <authorList>
            <person name="Anand C."/>
            <person name="Santoshi M."/>
            <person name="Singh P.R."/>
            <person name="Nagaraja V."/>
        </authorList>
    </citation>
    <scope>FUNCTION</scope>
    <scope>CATALYTIC ACTIVITY</scope>
    <scope>ACTIVITY REGULATION</scope>
    <source>
        <strain>ATCC 25177 / H37Ra</strain>
    </source>
</reference>
<keyword id="KW-0963">Cytoplasm</keyword>
<keyword id="KW-0479">Metal-binding</keyword>
<keyword id="KW-0520">NAD</keyword>
<keyword id="KW-1185">Reference proteome</keyword>
<keyword id="KW-0808">Transferase</keyword>
<keyword id="KW-0862">Zinc</keyword>
<evidence type="ECO:0000255" key="1">
    <source>
        <dbReference type="HAMAP-Rule" id="MF_01121"/>
    </source>
</evidence>
<evidence type="ECO:0000269" key="2">
    <source>
    </source>
</evidence>
<evidence type="ECO:0000269" key="3">
    <source>
    </source>
</evidence>
<evidence type="ECO:0000312" key="4">
    <source>
        <dbReference type="EMBL" id="ABQ72899.1"/>
    </source>
</evidence>
<proteinExistence type="evidence at protein level"/>
<protein>
    <recommendedName>
        <fullName evidence="1">NAD-dependent protein deacylase</fullName>
        <ecNumber evidence="1 2">2.3.1.286</ecNumber>
    </recommendedName>
    <alternativeName>
        <fullName evidence="1">Regulatory protein SIR2 homolog</fullName>
    </alternativeName>
</protein>
<feature type="chain" id="PRO_0000459016" description="NAD-dependent protein deacylase">
    <location>
        <begin position="1"/>
        <end position="237"/>
    </location>
</feature>
<feature type="domain" description="Deacetylase sirtuin-type" evidence="1">
    <location>
        <begin position="1"/>
        <end position="235"/>
    </location>
</feature>
<feature type="active site" description="Proton acceptor" evidence="1">
    <location>
        <position position="104"/>
    </location>
</feature>
<feature type="binding site" evidence="1">
    <location>
        <position position="53"/>
    </location>
    <ligand>
        <name>substrate</name>
    </ligand>
</feature>
<feature type="binding site" evidence="1">
    <location>
        <position position="56"/>
    </location>
    <ligand>
        <name>substrate</name>
    </ligand>
</feature>
<feature type="binding site" evidence="1">
    <location>
        <begin position="86"/>
        <end position="89"/>
    </location>
    <ligand>
        <name>NAD(+)</name>
        <dbReference type="ChEBI" id="CHEBI:57540"/>
    </ligand>
</feature>
<feature type="binding site" evidence="1">
    <location>
        <position position="112"/>
    </location>
    <ligand>
        <name>Zn(2+)</name>
        <dbReference type="ChEBI" id="CHEBI:29105"/>
    </ligand>
</feature>
<feature type="binding site" evidence="1">
    <location>
        <position position="115"/>
    </location>
    <ligand>
        <name>Zn(2+)</name>
        <dbReference type="ChEBI" id="CHEBI:29105"/>
    </ligand>
</feature>
<feature type="binding site" evidence="1">
    <location>
        <position position="138"/>
    </location>
    <ligand>
        <name>Zn(2+)</name>
        <dbReference type="ChEBI" id="CHEBI:29105"/>
    </ligand>
</feature>
<feature type="binding site" evidence="1">
    <location>
        <position position="140"/>
    </location>
    <ligand>
        <name>Zn(2+)</name>
        <dbReference type="ChEBI" id="CHEBI:29105"/>
    </ligand>
</feature>
<feature type="binding site" evidence="1">
    <location>
        <begin position="177"/>
        <end position="179"/>
    </location>
    <ligand>
        <name>NAD(+)</name>
        <dbReference type="ChEBI" id="CHEBI:57540"/>
    </ligand>
</feature>
<feature type="binding site" evidence="1">
    <location>
        <begin position="203"/>
        <end position="205"/>
    </location>
    <ligand>
        <name>NAD(+)</name>
        <dbReference type="ChEBI" id="CHEBI:57540"/>
    </ligand>
</feature>
<feature type="binding site" evidence="1">
    <location>
        <position position="221"/>
    </location>
    <ligand>
        <name>NAD(+)</name>
        <dbReference type="ChEBI" id="CHEBI:57540"/>
    </ligand>
</feature>
<name>NPD_MYCTA</name>
<gene>
    <name evidence="1" type="primary">cobB</name>
    <name evidence="4" type="ordered locus">MRA_1161</name>
</gene>
<accession>A5U1J9</accession>
<organism>
    <name type="scientific">Mycobacterium tuberculosis (strain ATCC 25177 / H37Ra)</name>
    <dbReference type="NCBI Taxonomy" id="419947"/>
    <lineage>
        <taxon>Bacteria</taxon>
        <taxon>Bacillati</taxon>
        <taxon>Actinomycetota</taxon>
        <taxon>Actinomycetes</taxon>
        <taxon>Mycobacteriales</taxon>
        <taxon>Mycobacteriaceae</taxon>
        <taxon>Mycobacterium</taxon>
        <taxon>Mycobacterium tuberculosis complex</taxon>
    </lineage>
</organism>
<dbReference type="EC" id="2.3.1.286" evidence="1 2"/>
<dbReference type="EMBL" id="CP000611">
    <property type="protein sequence ID" value="ABQ72899.1"/>
    <property type="molecule type" value="Genomic_DNA"/>
</dbReference>
<dbReference type="RefSeq" id="WP_003406044.1">
    <property type="nucleotide sequence ID" value="NZ_CP016972.1"/>
</dbReference>
<dbReference type="SMR" id="A5U1J9"/>
<dbReference type="KEGG" id="mra:MRA_1161"/>
<dbReference type="eggNOG" id="COG0846">
    <property type="taxonomic scope" value="Bacteria"/>
</dbReference>
<dbReference type="HOGENOM" id="CLU_023643_3_1_11"/>
<dbReference type="Proteomes" id="UP000001988">
    <property type="component" value="Chromosome"/>
</dbReference>
<dbReference type="GO" id="GO:0005737">
    <property type="term" value="C:cytoplasm"/>
    <property type="evidence" value="ECO:0007669"/>
    <property type="project" value="UniProtKB-SubCell"/>
</dbReference>
<dbReference type="GO" id="GO:0017136">
    <property type="term" value="F:histone deacetylase activity, NAD-dependent"/>
    <property type="evidence" value="ECO:0007669"/>
    <property type="project" value="TreeGrafter"/>
</dbReference>
<dbReference type="GO" id="GO:0070403">
    <property type="term" value="F:NAD+ binding"/>
    <property type="evidence" value="ECO:0007669"/>
    <property type="project" value="UniProtKB-UniRule"/>
</dbReference>
<dbReference type="GO" id="GO:0036054">
    <property type="term" value="F:protein-malonyllysine demalonylase activity"/>
    <property type="evidence" value="ECO:0007669"/>
    <property type="project" value="InterPro"/>
</dbReference>
<dbReference type="GO" id="GO:0036055">
    <property type="term" value="F:protein-succinyllysine desuccinylase activity"/>
    <property type="evidence" value="ECO:0007669"/>
    <property type="project" value="UniProtKB-UniRule"/>
</dbReference>
<dbReference type="GO" id="GO:0008270">
    <property type="term" value="F:zinc ion binding"/>
    <property type="evidence" value="ECO:0007669"/>
    <property type="project" value="UniProtKB-UniRule"/>
</dbReference>
<dbReference type="CDD" id="cd01412">
    <property type="entry name" value="SIRT5_Af1_CobB"/>
    <property type="match status" value="1"/>
</dbReference>
<dbReference type="Gene3D" id="3.30.1600.10">
    <property type="entry name" value="SIR2/SIRT2 'Small Domain"/>
    <property type="match status" value="1"/>
</dbReference>
<dbReference type="Gene3D" id="3.40.50.1220">
    <property type="entry name" value="TPP-binding domain"/>
    <property type="match status" value="1"/>
</dbReference>
<dbReference type="HAMAP" id="MF_01121">
    <property type="entry name" value="Sirtuin_ClassIII"/>
    <property type="match status" value="1"/>
</dbReference>
<dbReference type="InterPro" id="IPR029035">
    <property type="entry name" value="DHS-like_NAD/FAD-binding_dom"/>
</dbReference>
<dbReference type="InterPro" id="IPR050134">
    <property type="entry name" value="NAD-dep_sirtuin_deacylases"/>
</dbReference>
<dbReference type="InterPro" id="IPR003000">
    <property type="entry name" value="Sirtuin"/>
</dbReference>
<dbReference type="InterPro" id="IPR026591">
    <property type="entry name" value="Sirtuin_cat_small_dom_sf"/>
</dbReference>
<dbReference type="InterPro" id="IPR027546">
    <property type="entry name" value="Sirtuin_class_III"/>
</dbReference>
<dbReference type="InterPro" id="IPR026590">
    <property type="entry name" value="Ssirtuin_cat_dom"/>
</dbReference>
<dbReference type="NCBIfam" id="NF001753">
    <property type="entry name" value="PRK00481.1-3"/>
    <property type="match status" value="1"/>
</dbReference>
<dbReference type="PANTHER" id="PTHR11085:SF4">
    <property type="entry name" value="NAD-DEPENDENT PROTEIN DEACYLASE"/>
    <property type="match status" value="1"/>
</dbReference>
<dbReference type="PANTHER" id="PTHR11085">
    <property type="entry name" value="NAD-DEPENDENT PROTEIN DEACYLASE SIRTUIN-5, MITOCHONDRIAL-RELATED"/>
    <property type="match status" value="1"/>
</dbReference>
<dbReference type="Pfam" id="PF02146">
    <property type="entry name" value="SIR2"/>
    <property type="match status" value="1"/>
</dbReference>
<dbReference type="SUPFAM" id="SSF52467">
    <property type="entry name" value="DHS-like NAD/FAD-binding domain"/>
    <property type="match status" value="1"/>
</dbReference>
<dbReference type="PROSITE" id="PS50305">
    <property type="entry name" value="SIRTUIN"/>
    <property type="match status" value="1"/>
</dbReference>